<name>ARNE_SHIFL</name>
<evidence type="ECO:0000255" key="1">
    <source>
        <dbReference type="HAMAP-Rule" id="MF_01869"/>
    </source>
</evidence>
<keyword id="KW-0997">Cell inner membrane</keyword>
<keyword id="KW-1003">Cell membrane</keyword>
<keyword id="KW-0441">Lipid A biosynthesis</keyword>
<keyword id="KW-0444">Lipid biosynthesis</keyword>
<keyword id="KW-0443">Lipid metabolism</keyword>
<keyword id="KW-0448">Lipopolysaccharide biosynthesis</keyword>
<keyword id="KW-0472">Membrane</keyword>
<keyword id="KW-1185">Reference proteome</keyword>
<keyword id="KW-0812">Transmembrane</keyword>
<keyword id="KW-1133">Transmembrane helix</keyword>
<keyword id="KW-0813">Transport</keyword>
<proteinExistence type="inferred from homology"/>
<organism>
    <name type="scientific">Shigella flexneri</name>
    <dbReference type="NCBI Taxonomy" id="623"/>
    <lineage>
        <taxon>Bacteria</taxon>
        <taxon>Pseudomonadati</taxon>
        <taxon>Pseudomonadota</taxon>
        <taxon>Gammaproteobacteria</taxon>
        <taxon>Enterobacterales</taxon>
        <taxon>Enterobacteriaceae</taxon>
        <taxon>Shigella</taxon>
    </lineage>
</organism>
<reference key="1">
    <citation type="journal article" date="2002" name="Nucleic Acids Res.">
        <title>Genome sequence of Shigella flexneri 2a: insights into pathogenicity through comparison with genomes of Escherichia coli K12 and O157.</title>
        <authorList>
            <person name="Jin Q."/>
            <person name="Yuan Z."/>
            <person name="Xu J."/>
            <person name="Wang Y."/>
            <person name="Shen Y."/>
            <person name="Lu W."/>
            <person name="Wang J."/>
            <person name="Liu H."/>
            <person name="Yang J."/>
            <person name="Yang F."/>
            <person name="Zhang X."/>
            <person name="Zhang J."/>
            <person name="Yang G."/>
            <person name="Wu H."/>
            <person name="Qu D."/>
            <person name="Dong J."/>
            <person name="Sun L."/>
            <person name="Xue Y."/>
            <person name="Zhao A."/>
            <person name="Gao Y."/>
            <person name="Zhu J."/>
            <person name="Kan B."/>
            <person name="Ding K."/>
            <person name="Chen S."/>
            <person name="Cheng H."/>
            <person name="Yao Z."/>
            <person name="He B."/>
            <person name="Chen R."/>
            <person name="Ma D."/>
            <person name="Qiang B."/>
            <person name="Wen Y."/>
            <person name="Hou Y."/>
            <person name="Yu J."/>
        </authorList>
    </citation>
    <scope>NUCLEOTIDE SEQUENCE [LARGE SCALE GENOMIC DNA]</scope>
    <source>
        <strain>301 / Serotype 2a</strain>
    </source>
</reference>
<reference key="2">
    <citation type="journal article" date="2003" name="Infect. Immun.">
        <title>Complete genome sequence and comparative genomics of Shigella flexneri serotype 2a strain 2457T.</title>
        <authorList>
            <person name="Wei J."/>
            <person name="Goldberg M.B."/>
            <person name="Burland V."/>
            <person name="Venkatesan M.M."/>
            <person name="Deng W."/>
            <person name="Fournier G."/>
            <person name="Mayhew G.F."/>
            <person name="Plunkett G. III"/>
            <person name="Rose D.J."/>
            <person name="Darling A."/>
            <person name="Mau B."/>
            <person name="Perna N.T."/>
            <person name="Payne S.M."/>
            <person name="Runyen-Janecky L.J."/>
            <person name="Zhou S."/>
            <person name="Schwartz D.C."/>
            <person name="Blattner F.R."/>
        </authorList>
    </citation>
    <scope>NUCLEOTIDE SEQUENCE [LARGE SCALE GENOMIC DNA]</scope>
    <source>
        <strain>ATCC 700930 / 2457T / Serotype 2a</strain>
    </source>
</reference>
<accession>Q7UC61</accession>
<feature type="chain" id="PRO_0000383007" description="Probable 4-amino-4-deoxy-L-arabinose-phosphoundecaprenol flippase subunit ArnE">
    <location>
        <begin position="1"/>
        <end position="111"/>
    </location>
</feature>
<feature type="transmembrane region" description="Helical" evidence="1">
    <location>
        <begin position="36"/>
        <end position="56"/>
    </location>
</feature>
<feature type="transmembrane region" description="Helical" evidence="1">
    <location>
        <begin position="61"/>
        <end position="81"/>
    </location>
</feature>
<feature type="transmembrane region" description="Helical" evidence="1">
    <location>
        <begin position="88"/>
        <end position="108"/>
    </location>
</feature>
<feature type="domain" description="EamA" evidence="1">
    <location>
        <begin position="40"/>
        <end position="109"/>
    </location>
</feature>
<gene>
    <name evidence="1" type="primary">arnE</name>
    <name type="ordered locus">SF2336.1</name>
    <name type="ordered locus">S2567</name>
</gene>
<protein>
    <recommendedName>
        <fullName evidence="1">Probable 4-amino-4-deoxy-L-arabinose-phosphoundecaprenol flippase subunit ArnE</fullName>
        <shortName evidence="1">L-Ara4N-phosphoundecaprenol flippase subunit ArnE</shortName>
    </recommendedName>
    <alternativeName>
        <fullName evidence="1">Undecaprenyl phosphate-aminoarabinose flippase subunit ArnE</fullName>
    </alternativeName>
</protein>
<sequence>MIWLTLVFASLLSVAGQLCQKQATCFVAINKRRKHIVLWLGLALACLGLAMMLWLLVLQNVPVGIAYPMLSLNFVWVTLAAVKLWHEPVSPRHWCGVAFIIGGIVILGSTV</sequence>
<dbReference type="EMBL" id="AE005674">
    <property type="status" value="NOT_ANNOTATED_CDS"/>
    <property type="molecule type" value="Genomic_DNA"/>
</dbReference>
<dbReference type="EMBL" id="AE014073">
    <property type="protein sequence ID" value="AAP17670.1"/>
    <property type="molecule type" value="Genomic_DNA"/>
</dbReference>
<dbReference type="RefSeq" id="WP_000638024.1">
    <property type="nucleotide sequence ID" value="NZ_WPGW01000032.1"/>
</dbReference>
<dbReference type="SMR" id="Q7UC61"/>
<dbReference type="KEGG" id="sfx:S2567"/>
<dbReference type="PATRIC" id="fig|623.156.peg.4170"/>
<dbReference type="HOGENOM" id="CLU_131462_5_1_6"/>
<dbReference type="UniPathway" id="UPA00030"/>
<dbReference type="Proteomes" id="UP000001006">
    <property type="component" value="Chromosome"/>
</dbReference>
<dbReference type="Proteomes" id="UP000002673">
    <property type="component" value="Chromosome"/>
</dbReference>
<dbReference type="GO" id="GO:0005886">
    <property type="term" value="C:plasma membrane"/>
    <property type="evidence" value="ECO:0007669"/>
    <property type="project" value="UniProtKB-SubCell"/>
</dbReference>
<dbReference type="GO" id="GO:1901505">
    <property type="term" value="F:carbohydrate derivative transmembrane transporter activity"/>
    <property type="evidence" value="ECO:0007669"/>
    <property type="project" value="InterPro"/>
</dbReference>
<dbReference type="GO" id="GO:0009245">
    <property type="term" value="P:lipid A biosynthetic process"/>
    <property type="evidence" value="ECO:0007669"/>
    <property type="project" value="UniProtKB-UniRule"/>
</dbReference>
<dbReference type="GO" id="GO:0009103">
    <property type="term" value="P:lipopolysaccharide biosynthetic process"/>
    <property type="evidence" value="ECO:0007669"/>
    <property type="project" value="UniProtKB-UniRule"/>
</dbReference>
<dbReference type="FunFam" id="1.10.3730.20:FF:000002">
    <property type="entry name" value="Probable 4-amino-4-deoxy-L-arabinose-phosphoundecaprenol flippase subunit ArnE"/>
    <property type="match status" value="1"/>
</dbReference>
<dbReference type="Gene3D" id="1.10.3730.20">
    <property type="match status" value="1"/>
</dbReference>
<dbReference type="HAMAP" id="MF_01869">
    <property type="entry name" value="Flippase_ArnE"/>
    <property type="match status" value="1"/>
</dbReference>
<dbReference type="InterPro" id="IPR000620">
    <property type="entry name" value="EamA_dom"/>
</dbReference>
<dbReference type="InterPro" id="IPR022883">
    <property type="entry name" value="Flippase_ArnE"/>
</dbReference>
<dbReference type="InterPro" id="IPR000390">
    <property type="entry name" value="Small_drug/metabolite_transptr"/>
</dbReference>
<dbReference type="NCBIfam" id="NF011625">
    <property type="entry name" value="PRK15051.1"/>
    <property type="match status" value="1"/>
</dbReference>
<dbReference type="PANTHER" id="PTHR30561:SF23">
    <property type="entry name" value="4-AMINO-4-DEOXY-L-ARABINOSE-PHOSPHOUNDECAPRENOL FLIPPASE SUBUNIT ARNE-RELATED"/>
    <property type="match status" value="1"/>
</dbReference>
<dbReference type="PANTHER" id="PTHR30561">
    <property type="entry name" value="SMR FAMILY PROTON-DEPENDENT DRUG EFFLUX TRANSPORTER SUGE"/>
    <property type="match status" value="1"/>
</dbReference>
<dbReference type="Pfam" id="PF00892">
    <property type="entry name" value="EamA"/>
    <property type="match status" value="1"/>
</dbReference>
<dbReference type="SUPFAM" id="SSF103481">
    <property type="entry name" value="Multidrug resistance efflux transporter EmrE"/>
    <property type="match status" value="1"/>
</dbReference>
<comment type="function">
    <text evidence="1">Translocates 4-amino-4-deoxy-L-arabinose-phosphoundecaprenol (alpha-L-Ara4N-phosphoundecaprenol) from the cytoplasmic to the periplasmic side of the inner membrane.</text>
</comment>
<comment type="pathway">
    <text evidence="1">Bacterial outer membrane biogenesis; lipopolysaccharide biosynthesis.</text>
</comment>
<comment type="subunit">
    <text evidence="1">Heterodimer of ArnE and ArnF.</text>
</comment>
<comment type="subcellular location">
    <subcellularLocation>
        <location evidence="1">Cell inner membrane</location>
        <topology evidence="1">Multi-pass membrane protein</topology>
    </subcellularLocation>
</comment>
<comment type="similarity">
    <text evidence="1">Belongs to the ArnE family.</text>
</comment>